<evidence type="ECO:0000250" key="1"/>
<evidence type="ECO:0000250" key="2">
    <source>
        <dbReference type="UniProtKB" id="P41136"/>
    </source>
</evidence>
<evidence type="ECO:0000250" key="3">
    <source>
        <dbReference type="UniProtKB" id="P41137"/>
    </source>
</evidence>
<evidence type="ECO:0000250" key="4">
    <source>
        <dbReference type="UniProtKB" id="Q02363"/>
    </source>
</evidence>
<evidence type="ECO:0000255" key="5">
    <source>
        <dbReference type="PROSITE-ProRule" id="PRU00981"/>
    </source>
</evidence>
<proteinExistence type="evidence at transcript level"/>
<keyword id="KW-0090">Biological rhythms</keyword>
<keyword id="KW-0963">Cytoplasm</keyword>
<keyword id="KW-0217">Developmental protein</keyword>
<keyword id="KW-0539">Nucleus</keyword>
<keyword id="KW-0597">Phosphoprotein</keyword>
<keyword id="KW-1185">Reference proteome</keyword>
<keyword id="KW-0678">Repressor</keyword>
<keyword id="KW-0804">Transcription</keyword>
<keyword id="KW-0805">Transcription regulation</keyword>
<keyword id="KW-0832">Ubl conjugation</keyword>
<comment type="function">
    <text evidence="1">Transcriptional regulator (lacking a basic DNA binding domain) which negatively regulates the basic helix-loop-helix (bHLH) transcription factors by forming heterodimers and inhibiting their DNA binding and transcriptional activity. Implicated in regulating a variety of cellular processes, including cellular growth, senescence, differentiation, apoptosis, angiogenesis, and neoplastic transformation. Inhibits skeletal muscle and cardiac myocyte differentiation. Regulates the circadian clock by repressing the transcriptional activator activity of the CLOCK-BMAL1 heterodimer. Restricts the CLOCK and BMAL1 localization to the cytoplasm. Plays a role in both the input and output pathways of the circadian clock: in the input component, is involved in modulating the magnitude of photic entrainment and in the output component, contributes to the regulation of a variety of liver clock-controlled genes involved in lipid metabolism (By similarity).</text>
</comment>
<comment type="subunit">
    <text evidence="2 4">Interacts with GATA4 and NKX2-5 (By similarity). Interacts with NR0B2. Interacts with CLOCK and BMAL1 (By similarity). Interacts with IFI204 (By similarity). Interacts with NEDD9/HEF1. Interacts with ASB4; this interaction promotes ID2 proteasomal degradation (By similarity).</text>
</comment>
<comment type="subcellular location">
    <subcellularLocation>
        <location evidence="2">Cytoplasm</location>
    </subcellularLocation>
    <subcellularLocation>
        <location evidence="2">Nucleus</location>
    </subcellularLocation>
</comment>
<comment type="domain">
    <text evidence="1">The bHLH domain is essential for its repressor activity towards the CLOCK-BMAL1 heterodimer.</text>
</comment>
<comment type="PTM">
    <text evidence="4">Ubiquitinated in a ASB4-depedent manner, leading to proteasomal degradation.</text>
</comment>
<comment type="PTM">
    <text evidence="3">Phosphorylated in vitro by CDK1, PKA and PKC.</text>
</comment>
<dbReference type="EMBL" id="CR858293">
    <property type="protein sequence ID" value="CAH90530.1"/>
    <property type="molecule type" value="mRNA"/>
</dbReference>
<dbReference type="RefSeq" id="NP_001125282.1">
    <property type="nucleotide sequence ID" value="NM_001131810.2"/>
</dbReference>
<dbReference type="SMR" id="Q5RCH7"/>
<dbReference type="FunCoup" id="Q5RCH7">
    <property type="interactions" value="1907"/>
</dbReference>
<dbReference type="STRING" id="9601.ENSPPYP00000014197"/>
<dbReference type="GeneID" id="100172180"/>
<dbReference type="KEGG" id="pon:100172180"/>
<dbReference type="CTD" id="3398"/>
<dbReference type="eggNOG" id="ENOG502RZP5">
    <property type="taxonomic scope" value="Eukaryota"/>
</dbReference>
<dbReference type="HOGENOM" id="CLU_116790_2_1_1"/>
<dbReference type="InParanoid" id="Q5RCH7"/>
<dbReference type="OrthoDB" id="10047910at2759"/>
<dbReference type="TreeFam" id="TF326217"/>
<dbReference type="Proteomes" id="UP000001595">
    <property type="component" value="Unplaced"/>
</dbReference>
<dbReference type="GO" id="GO:0005737">
    <property type="term" value="C:cytoplasm"/>
    <property type="evidence" value="ECO:0000250"/>
    <property type="project" value="UniProtKB"/>
</dbReference>
<dbReference type="GO" id="GO:0005634">
    <property type="term" value="C:nucleus"/>
    <property type="evidence" value="ECO:0007669"/>
    <property type="project" value="UniProtKB-SubCell"/>
</dbReference>
<dbReference type="GO" id="GO:0032991">
    <property type="term" value="C:protein-containing complex"/>
    <property type="evidence" value="ECO:0000250"/>
    <property type="project" value="UniProtKB"/>
</dbReference>
<dbReference type="GO" id="GO:0046983">
    <property type="term" value="F:protein dimerization activity"/>
    <property type="evidence" value="ECO:0007669"/>
    <property type="project" value="InterPro"/>
</dbReference>
<dbReference type="GO" id="GO:0090398">
    <property type="term" value="P:cellular senescence"/>
    <property type="evidence" value="ECO:0000250"/>
    <property type="project" value="UniProtKB"/>
</dbReference>
<dbReference type="GO" id="GO:0032922">
    <property type="term" value="P:circadian regulation of gene expression"/>
    <property type="evidence" value="ECO:0000250"/>
    <property type="project" value="UniProtKB"/>
</dbReference>
<dbReference type="GO" id="GO:0048557">
    <property type="term" value="P:embryonic digestive tract morphogenesis"/>
    <property type="evidence" value="ECO:0000250"/>
    <property type="project" value="UniProtKB"/>
</dbReference>
<dbReference type="GO" id="GO:0061031">
    <property type="term" value="P:endodermal digestive tract morphogenesis"/>
    <property type="evidence" value="ECO:0000250"/>
    <property type="project" value="UniProtKB"/>
</dbReference>
<dbReference type="GO" id="GO:0043153">
    <property type="term" value="P:entrainment of circadian clock by photoperiod"/>
    <property type="evidence" value="ECO:0000250"/>
    <property type="project" value="UniProtKB"/>
</dbReference>
<dbReference type="GO" id="GO:0061030">
    <property type="term" value="P:epithelial cell differentiation involved in mammary gland alveolus development"/>
    <property type="evidence" value="ECO:0000250"/>
    <property type="project" value="UniProtKB"/>
</dbReference>
<dbReference type="GO" id="GO:0045475">
    <property type="term" value="P:locomotor rhythm"/>
    <property type="evidence" value="ECO:0000250"/>
    <property type="project" value="UniProtKB"/>
</dbReference>
<dbReference type="GO" id="GO:0060749">
    <property type="term" value="P:mammary gland alveolus development"/>
    <property type="evidence" value="ECO:0000250"/>
    <property type="project" value="UniProtKB"/>
</dbReference>
<dbReference type="GO" id="GO:0033598">
    <property type="term" value="P:mammary gland epithelial cell proliferation"/>
    <property type="evidence" value="ECO:0000250"/>
    <property type="project" value="UniProtKB"/>
</dbReference>
<dbReference type="GO" id="GO:0010629">
    <property type="term" value="P:negative regulation of gene expression"/>
    <property type="evidence" value="ECO:0000250"/>
    <property type="project" value="UniProtKB"/>
</dbReference>
<dbReference type="GO" id="GO:0000122">
    <property type="term" value="P:negative regulation of transcription by RNA polymerase II"/>
    <property type="evidence" value="ECO:0007669"/>
    <property type="project" value="InterPro"/>
</dbReference>
<dbReference type="GO" id="GO:0048663">
    <property type="term" value="P:neuron fate commitment"/>
    <property type="evidence" value="ECO:0000250"/>
    <property type="project" value="UniProtKB"/>
</dbReference>
<dbReference type="GO" id="GO:0045777">
    <property type="term" value="P:positive regulation of blood pressure"/>
    <property type="evidence" value="ECO:0000250"/>
    <property type="project" value="UniProtKB"/>
</dbReference>
<dbReference type="GO" id="GO:0045893">
    <property type="term" value="P:positive regulation of DNA-templated transcription"/>
    <property type="evidence" value="ECO:0000250"/>
    <property type="project" value="UniProtKB"/>
</dbReference>
<dbReference type="GO" id="GO:0010628">
    <property type="term" value="P:positive regulation of gene expression"/>
    <property type="evidence" value="ECO:0000250"/>
    <property type="project" value="UniProtKB"/>
</dbReference>
<dbReference type="GO" id="GO:0048661">
    <property type="term" value="P:positive regulation of smooth muscle cell proliferation"/>
    <property type="evidence" value="ECO:0000250"/>
    <property type="project" value="UniProtKB"/>
</dbReference>
<dbReference type="GO" id="GO:0042752">
    <property type="term" value="P:regulation of circadian rhythm"/>
    <property type="evidence" value="ECO:0000250"/>
    <property type="project" value="UniProtKB"/>
</dbReference>
<dbReference type="GO" id="GO:0010468">
    <property type="term" value="P:regulation of gene expression"/>
    <property type="evidence" value="ECO:0000250"/>
    <property type="project" value="UniProtKB"/>
</dbReference>
<dbReference type="GO" id="GO:0019216">
    <property type="term" value="P:regulation of lipid metabolic process"/>
    <property type="evidence" value="ECO:0000250"/>
    <property type="project" value="UniProtKB"/>
</dbReference>
<dbReference type="GO" id="GO:2000177">
    <property type="term" value="P:regulation of neural precursor cell proliferation"/>
    <property type="evidence" value="ECO:0000250"/>
    <property type="project" value="UniProtKB"/>
</dbReference>
<dbReference type="GO" id="GO:0045664">
    <property type="term" value="P:regulation of neuron differentiation"/>
    <property type="evidence" value="ECO:0000250"/>
    <property type="project" value="UniProtKB"/>
</dbReference>
<dbReference type="CDD" id="cd19692">
    <property type="entry name" value="bHLH_dnHLH_ID2"/>
    <property type="match status" value="1"/>
</dbReference>
<dbReference type="FunFam" id="4.10.280.10:FF:000055">
    <property type="entry name" value="DNA-binding protein inhibitor ID-2"/>
    <property type="match status" value="1"/>
</dbReference>
<dbReference type="Gene3D" id="4.10.280.10">
    <property type="entry name" value="Helix-loop-helix DNA-binding domain"/>
    <property type="match status" value="1"/>
</dbReference>
<dbReference type="InterPro" id="IPR011598">
    <property type="entry name" value="bHLH_dom"/>
</dbReference>
<dbReference type="InterPro" id="IPR026052">
    <property type="entry name" value="DNA-bd_prot-inh"/>
</dbReference>
<dbReference type="InterPro" id="IPR036638">
    <property type="entry name" value="HLH_DNA-bd_sf"/>
</dbReference>
<dbReference type="PANTHER" id="PTHR11723">
    <property type="entry name" value="DNA-BINDING PROTEIN INHIBITOR"/>
    <property type="match status" value="1"/>
</dbReference>
<dbReference type="PANTHER" id="PTHR11723:SF5">
    <property type="entry name" value="DNA-BINDING PROTEIN INHIBITOR ID-2"/>
    <property type="match status" value="1"/>
</dbReference>
<dbReference type="Pfam" id="PF00010">
    <property type="entry name" value="HLH"/>
    <property type="match status" value="1"/>
</dbReference>
<dbReference type="SMART" id="SM00353">
    <property type="entry name" value="HLH"/>
    <property type="match status" value="1"/>
</dbReference>
<dbReference type="SUPFAM" id="SSF47459">
    <property type="entry name" value="HLH, helix-loop-helix DNA-binding domain"/>
    <property type="match status" value="1"/>
</dbReference>
<dbReference type="PROSITE" id="PS50888">
    <property type="entry name" value="BHLH"/>
    <property type="match status" value="1"/>
</dbReference>
<protein>
    <recommendedName>
        <fullName>DNA-binding protein inhibitor ID-2</fullName>
    </recommendedName>
    <alternativeName>
        <fullName>Inhibitor of DNA binding 2</fullName>
    </alternativeName>
    <alternativeName>
        <fullName>Inhibitor of differentiation 2</fullName>
    </alternativeName>
</protein>
<gene>
    <name type="primary">ID2</name>
</gene>
<feature type="chain" id="PRO_0000127243" description="DNA-binding protein inhibitor ID-2">
    <location>
        <begin position="1"/>
        <end position="134"/>
    </location>
</feature>
<feature type="domain" description="bHLH" evidence="5">
    <location>
        <begin position="23"/>
        <end position="75"/>
    </location>
</feature>
<feature type="short sequence motif" description="Nuclear export signal" evidence="1">
    <location>
        <begin position="106"/>
        <end position="115"/>
    </location>
</feature>
<feature type="modified residue" description="Phosphoserine" evidence="4">
    <location>
        <position position="14"/>
    </location>
</feature>
<feature type="modified residue" description="Phosphoserine" evidence="2">
    <location>
        <position position="25"/>
    </location>
</feature>
<organism>
    <name type="scientific">Pongo abelii</name>
    <name type="common">Sumatran orangutan</name>
    <name type="synonym">Pongo pygmaeus abelii</name>
    <dbReference type="NCBI Taxonomy" id="9601"/>
    <lineage>
        <taxon>Eukaryota</taxon>
        <taxon>Metazoa</taxon>
        <taxon>Chordata</taxon>
        <taxon>Craniata</taxon>
        <taxon>Vertebrata</taxon>
        <taxon>Euteleostomi</taxon>
        <taxon>Mammalia</taxon>
        <taxon>Eutheria</taxon>
        <taxon>Euarchontoglires</taxon>
        <taxon>Primates</taxon>
        <taxon>Haplorrhini</taxon>
        <taxon>Catarrhini</taxon>
        <taxon>Hominidae</taxon>
        <taxon>Pongo</taxon>
    </lineage>
</organism>
<sequence>MKAFSPVRSVRKNSLSDHSLGISRSKTPVDDPMSLLYNMNDCYSKLKELVPSIPQNKKVSKMEILQHVIDYILDLQIALDSHPTIVSLHHQRPGQNQASRTPLTTLNTDISILSLQASEFPSELMSNDSKALCG</sequence>
<name>ID2_PONAB</name>
<accession>Q5RCH7</accession>
<reference key="1">
    <citation type="submission" date="2004-11" db="EMBL/GenBank/DDBJ databases">
        <authorList>
            <consortium name="The German cDNA consortium"/>
        </authorList>
    </citation>
    <scope>NUCLEOTIDE SEQUENCE [LARGE SCALE MRNA]</scope>
    <source>
        <tissue>Kidney</tissue>
    </source>
</reference>